<reference key="1">
    <citation type="journal article" date="2008" name="BMC Genomics">
        <title>The genome of Aeromonas salmonicida subsp. salmonicida A449: insights into the evolution of a fish pathogen.</title>
        <authorList>
            <person name="Reith M.E."/>
            <person name="Singh R.K."/>
            <person name="Curtis B."/>
            <person name="Boyd J.M."/>
            <person name="Bouevitch A."/>
            <person name="Kimball J."/>
            <person name="Munholland J."/>
            <person name="Murphy C."/>
            <person name="Sarty D."/>
            <person name="Williams J."/>
            <person name="Nash J.H."/>
            <person name="Johnson S.C."/>
            <person name="Brown L.L."/>
        </authorList>
    </citation>
    <scope>NUCLEOTIDE SEQUENCE [LARGE SCALE GENOMIC DNA]</scope>
    <source>
        <strain>A449</strain>
    </source>
</reference>
<feature type="chain" id="PRO_0000380521" description="UDP-4-amino-4-deoxy-L-arabinose--oxoglutarate aminotransferase">
    <location>
        <begin position="1"/>
        <end position="378"/>
    </location>
</feature>
<feature type="modified residue" description="N6-(pyridoxal phosphate)lysine" evidence="1">
    <location>
        <position position="182"/>
    </location>
</feature>
<gene>
    <name evidence="1" type="primary">arnB</name>
    <name type="ordered locus">ASA_3307</name>
</gene>
<dbReference type="EC" id="2.6.1.87" evidence="1"/>
<dbReference type="EMBL" id="CP000644">
    <property type="protein sequence ID" value="ABO91289.1"/>
    <property type="molecule type" value="Genomic_DNA"/>
</dbReference>
<dbReference type="RefSeq" id="WP_005311782.1">
    <property type="nucleotide sequence ID" value="NC_009348.1"/>
</dbReference>
<dbReference type="SMR" id="A4SQW7"/>
<dbReference type="STRING" id="29491.GCA_000820065_03693"/>
<dbReference type="KEGG" id="asa:ASA_3307"/>
<dbReference type="PATRIC" id="fig|382245.13.peg.3288"/>
<dbReference type="eggNOG" id="COG0399">
    <property type="taxonomic scope" value="Bacteria"/>
</dbReference>
<dbReference type="HOGENOM" id="CLU_033332_0_3_6"/>
<dbReference type="UniPathway" id="UPA00030"/>
<dbReference type="UniPathway" id="UPA00032">
    <property type="reaction ID" value="UER00493"/>
</dbReference>
<dbReference type="Proteomes" id="UP000000225">
    <property type="component" value="Chromosome"/>
</dbReference>
<dbReference type="GO" id="GO:0016020">
    <property type="term" value="C:membrane"/>
    <property type="evidence" value="ECO:0007669"/>
    <property type="project" value="GOC"/>
</dbReference>
<dbReference type="GO" id="GO:0030170">
    <property type="term" value="F:pyridoxal phosphate binding"/>
    <property type="evidence" value="ECO:0007669"/>
    <property type="project" value="TreeGrafter"/>
</dbReference>
<dbReference type="GO" id="GO:0099620">
    <property type="term" value="F:UDP-4-amino-4-deoxy-L-arabinose aminotransferase"/>
    <property type="evidence" value="ECO:0007669"/>
    <property type="project" value="UniProtKB-EC"/>
</dbReference>
<dbReference type="GO" id="GO:0009245">
    <property type="term" value="P:lipid A biosynthetic process"/>
    <property type="evidence" value="ECO:0007669"/>
    <property type="project" value="UniProtKB-KW"/>
</dbReference>
<dbReference type="GO" id="GO:0009103">
    <property type="term" value="P:lipopolysaccharide biosynthetic process"/>
    <property type="evidence" value="ECO:0007669"/>
    <property type="project" value="UniProtKB-UniRule"/>
</dbReference>
<dbReference type="GO" id="GO:0046677">
    <property type="term" value="P:response to antibiotic"/>
    <property type="evidence" value="ECO:0007669"/>
    <property type="project" value="UniProtKB-KW"/>
</dbReference>
<dbReference type="CDD" id="cd00616">
    <property type="entry name" value="AHBA_syn"/>
    <property type="match status" value="1"/>
</dbReference>
<dbReference type="FunFam" id="3.40.640.10:FF:000040">
    <property type="entry name" value="UDP-4-amino-4-deoxy-L-arabinose--oxoglutarate aminotransferase"/>
    <property type="match status" value="1"/>
</dbReference>
<dbReference type="FunFam" id="3.90.1150.10:FF:000030">
    <property type="entry name" value="UDP-4-amino-4-deoxy-L-arabinose--oxoglutarate aminotransferase"/>
    <property type="match status" value="1"/>
</dbReference>
<dbReference type="Gene3D" id="3.90.1150.10">
    <property type="entry name" value="Aspartate Aminotransferase, domain 1"/>
    <property type="match status" value="1"/>
</dbReference>
<dbReference type="Gene3D" id="3.40.640.10">
    <property type="entry name" value="Type I PLP-dependent aspartate aminotransferase-like (Major domain)"/>
    <property type="match status" value="1"/>
</dbReference>
<dbReference type="HAMAP" id="MF_01167">
    <property type="entry name" value="ArnB_transfer"/>
    <property type="match status" value="1"/>
</dbReference>
<dbReference type="InterPro" id="IPR022850">
    <property type="entry name" value="ArnB_NH2Trfase"/>
</dbReference>
<dbReference type="InterPro" id="IPR000653">
    <property type="entry name" value="DegT/StrS_aminotransferase"/>
</dbReference>
<dbReference type="InterPro" id="IPR015424">
    <property type="entry name" value="PyrdxlP-dep_Trfase"/>
</dbReference>
<dbReference type="InterPro" id="IPR015421">
    <property type="entry name" value="PyrdxlP-dep_Trfase_major"/>
</dbReference>
<dbReference type="InterPro" id="IPR015422">
    <property type="entry name" value="PyrdxlP-dep_Trfase_small"/>
</dbReference>
<dbReference type="NCBIfam" id="NF008658">
    <property type="entry name" value="PRK11658.1"/>
    <property type="match status" value="1"/>
</dbReference>
<dbReference type="PANTHER" id="PTHR30244">
    <property type="entry name" value="TRANSAMINASE"/>
    <property type="match status" value="1"/>
</dbReference>
<dbReference type="PANTHER" id="PTHR30244:SF41">
    <property type="entry name" value="UDP-4-AMINO-4-DEOXY-L-ARABINOSE--OXOGLUTARATE AMINOTRANSFERASE"/>
    <property type="match status" value="1"/>
</dbReference>
<dbReference type="Pfam" id="PF01041">
    <property type="entry name" value="DegT_DnrJ_EryC1"/>
    <property type="match status" value="1"/>
</dbReference>
<dbReference type="PIRSF" id="PIRSF000390">
    <property type="entry name" value="PLP_StrS"/>
    <property type="match status" value="1"/>
</dbReference>
<dbReference type="SUPFAM" id="SSF53383">
    <property type="entry name" value="PLP-dependent transferases"/>
    <property type="match status" value="1"/>
</dbReference>
<sequence>MQDFLPFSKPAIGDAEISAVCEVLKSGWITTGPKSHELEQQFCDTYGCQHAVALNSATAGMHVTLMALGIGPGDEVITPSQTWVSTINLITLLGAEPVFVDVDRDTLMTSAELIAPLITVNTKAIIPVHYAGAPVDLDPILKLARQYDIPVIEDAAHAIGTRYRDRWIGATGTAIFSFHAIKNLTCAEGGMLVTDDKALADKVRMLKFHGLGVDAFDRMTLGSKPQAEVITPGFKYNLTDINAAIALIQLARLPELNARRAGLVARYQEKLAGLPLAPLAIPTYPHLHAWHLFMVRVDPERCGLDRDQLMQALQERGIGTGLHFRAAHTQKYYRERYPALSLPHTEWNSSRLCTLPLFPDMTLADVDRVVAALTDILE</sequence>
<keyword id="KW-0032">Aminotransferase</keyword>
<keyword id="KW-0046">Antibiotic resistance</keyword>
<keyword id="KW-0441">Lipid A biosynthesis</keyword>
<keyword id="KW-0444">Lipid biosynthesis</keyword>
<keyword id="KW-0443">Lipid metabolism</keyword>
<keyword id="KW-0448">Lipopolysaccharide biosynthesis</keyword>
<keyword id="KW-0663">Pyridoxal phosphate</keyword>
<keyword id="KW-0808">Transferase</keyword>
<name>ARNB_AERS4</name>
<protein>
    <recommendedName>
        <fullName evidence="1">UDP-4-amino-4-deoxy-L-arabinose--oxoglutarate aminotransferase</fullName>
        <ecNumber evidence="1">2.6.1.87</ecNumber>
    </recommendedName>
    <alternativeName>
        <fullName evidence="1">UDP-(beta-L-threo-pentapyranosyl-4''-ulose diphosphate) aminotransferase</fullName>
        <shortName evidence="1">UDP-Ara4O aminotransferase</shortName>
    </alternativeName>
    <alternativeName>
        <fullName evidence="1">UDP-4-amino-4-deoxy-L-arabinose aminotransferase</fullName>
    </alternativeName>
</protein>
<comment type="function">
    <text evidence="1">Catalyzes the conversion of UDP-4-keto-arabinose (UDP-Ara4O) to UDP-4-amino-4-deoxy-L-arabinose (UDP-L-Ara4N). The modified arabinose is attached to lipid A and is required for resistance to polymyxin and cationic antimicrobial peptides.</text>
</comment>
<comment type="catalytic activity">
    <reaction evidence="1">
        <text>UDP-4-amino-4-deoxy-beta-L-arabinose + 2-oxoglutarate = UDP-beta-L-threo-pentopyranos-4-ulose + L-glutamate</text>
        <dbReference type="Rhea" id="RHEA:24710"/>
        <dbReference type="ChEBI" id="CHEBI:16810"/>
        <dbReference type="ChEBI" id="CHEBI:29985"/>
        <dbReference type="ChEBI" id="CHEBI:58708"/>
        <dbReference type="ChEBI" id="CHEBI:58710"/>
        <dbReference type="EC" id="2.6.1.87"/>
    </reaction>
</comment>
<comment type="cofactor">
    <cofactor evidence="1">
        <name>pyridoxal 5'-phosphate</name>
        <dbReference type="ChEBI" id="CHEBI:597326"/>
    </cofactor>
</comment>
<comment type="pathway">
    <text evidence="1">Nucleotide-sugar biosynthesis; UDP-4-deoxy-4-formamido-beta-L-arabinose biosynthesis; UDP-4-deoxy-4-formamido-beta-L-arabinose from UDP-alpha-D-glucuronate: step 2/3.</text>
</comment>
<comment type="pathway">
    <text evidence="1">Bacterial outer membrane biogenesis; lipopolysaccharide biosynthesis.</text>
</comment>
<comment type="subunit">
    <text evidence="1">Homodimer.</text>
</comment>
<comment type="similarity">
    <text evidence="1">Belongs to the DegT/DnrJ/EryC1 family. ArnB subfamily.</text>
</comment>
<organism>
    <name type="scientific">Aeromonas salmonicida (strain A449)</name>
    <dbReference type="NCBI Taxonomy" id="382245"/>
    <lineage>
        <taxon>Bacteria</taxon>
        <taxon>Pseudomonadati</taxon>
        <taxon>Pseudomonadota</taxon>
        <taxon>Gammaproteobacteria</taxon>
        <taxon>Aeromonadales</taxon>
        <taxon>Aeromonadaceae</taxon>
        <taxon>Aeromonas</taxon>
    </lineage>
</organism>
<evidence type="ECO:0000255" key="1">
    <source>
        <dbReference type="HAMAP-Rule" id="MF_01167"/>
    </source>
</evidence>
<proteinExistence type="inferred from homology"/>
<accession>A4SQW7</accession>